<evidence type="ECO:0000255" key="1">
    <source>
        <dbReference type="HAMAP-Rule" id="MF_00286"/>
    </source>
</evidence>
<keyword id="KW-0997">Cell inner membrane</keyword>
<keyword id="KW-1003">Cell membrane</keyword>
<keyword id="KW-0143">Chaperone</keyword>
<keyword id="KW-1015">Disulfide bond</keyword>
<keyword id="KW-0249">Electron transport</keyword>
<keyword id="KW-0472">Membrane</keyword>
<keyword id="KW-0560">Oxidoreductase</keyword>
<keyword id="KW-0676">Redox-active center</keyword>
<keyword id="KW-0812">Transmembrane</keyword>
<keyword id="KW-1133">Transmembrane helix</keyword>
<keyword id="KW-0813">Transport</keyword>
<name>DSBB_MARN8</name>
<organism>
    <name type="scientific">Marinobacter nauticus (strain ATCC 700491 / DSM 11845 / VT8)</name>
    <name type="common">Marinobacter aquaeolei</name>
    <dbReference type="NCBI Taxonomy" id="351348"/>
    <lineage>
        <taxon>Bacteria</taxon>
        <taxon>Pseudomonadati</taxon>
        <taxon>Pseudomonadota</taxon>
        <taxon>Gammaproteobacteria</taxon>
        <taxon>Pseudomonadales</taxon>
        <taxon>Marinobacteraceae</taxon>
        <taxon>Marinobacter</taxon>
    </lineage>
</organism>
<comment type="function">
    <text evidence="1">Required for disulfide bond formation in some periplasmic proteins. Acts by oxidizing the DsbA protein.</text>
</comment>
<comment type="subcellular location">
    <subcellularLocation>
        <location evidence="1">Cell inner membrane</location>
        <topology evidence="1">Multi-pass membrane protein</topology>
    </subcellularLocation>
</comment>
<comment type="similarity">
    <text evidence="1">Belongs to the DsbB family.</text>
</comment>
<proteinExistence type="inferred from homology"/>
<sequence length="168" mass="18498">MTSRWIFGLVFLVCAGLLAVAFYMEHVMGLEPCPLCWLQRFGFMGAGLVSLLAFLHGPRGFGNRVYGLLLIVAAGAGLAVAGRQLWLQSLPADQVPACGPSVDYMLEVLPWFEVLQTALKGTGDCAEVVWRFLGLSIPGWTAVFFSLLIVLGLFVMLRRYSPRDWLQS</sequence>
<gene>
    <name evidence="1" type="primary">dsbB</name>
    <name type="ordered locus">Maqu_0468</name>
</gene>
<dbReference type="EMBL" id="CP000514">
    <property type="protein sequence ID" value="ABM17569.1"/>
    <property type="molecule type" value="Genomic_DNA"/>
</dbReference>
<dbReference type="RefSeq" id="WP_011784013.1">
    <property type="nucleotide sequence ID" value="NC_008740.1"/>
</dbReference>
<dbReference type="SMR" id="A1TXV0"/>
<dbReference type="STRING" id="351348.Maqu_0468"/>
<dbReference type="KEGG" id="maq:Maqu_0468"/>
<dbReference type="eggNOG" id="COG1495">
    <property type="taxonomic scope" value="Bacteria"/>
</dbReference>
<dbReference type="HOGENOM" id="CLU_098660_1_1_6"/>
<dbReference type="OrthoDB" id="3711263at2"/>
<dbReference type="Proteomes" id="UP000000998">
    <property type="component" value="Chromosome"/>
</dbReference>
<dbReference type="GO" id="GO:0005886">
    <property type="term" value="C:plasma membrane"/>
    <property type="evidence" value="ECO:0007669"/>
    <property type="project" value="UniProtKB-SubCell"/>
</dbReference>
<dbReference type="GO" id="GO:0009055">
    <property type="term" value="F:electron transfer activity"/>
    <property type="evidence" value="ECO:0007669"/>
    <property type="project" value="UniProtKB-UniRule"/>
</dbReference>
<dbReference type="GO" id="GO:0015035">
    <property type="term" value="F:protein-disulfide reductase activity"/>
    <property type="evidence" value="ECO:0007669"/>
    <property type="project" value="UniProtKB-UniRule"/>
</dbReference>
<dbReference type="GO" id="GO:0006457">
    <property type="term" value="P:protein folding"/>
    <property type="evidence" value="ECO:0007669"/>
    <property type="project" value="InterPro"/>
</dbReference>
<dbReference type="Gene3D" id="1.20.1550.10">
    <property type="entry name" value="DsbB-like"/>
    <property type="match status" value="1"/>
</dbReference>
<dbReference type="HAMAP" id="MF_00286">
    <property type="entry name" value="DsbB"/>
    <property type="match status" value="1"/>
</dbReference>
<dbReference type="InterPro" id="IPR003752">
    <property type="entry name" value="DiS_bond_form_DsbB/BdbC"/>
</dbReference>
<dbReference type="InterPro" id="IPR022920">
    <property type="entry name" value="Disulphide_bond_form_DsbB"/>
</dbReference>
<dbReference type="InterPro" id="IPR050183">
    <property type="entry name" value="DsbB"/>
</dbReference>
<dbReference type="InterPro" id="IPR023380">
    <property type="entry name" value="DsbB-like_sf"/>
</dbReference>
<dbReference type="PANTHER" id="PTHR36570">
    <property type="entry name" value="DISULFIDE BOND FORMATION PROTEIN B"/>
    <property type="match status" value="1"/>
</dbReference>
<dbReference type="PANTHER" id="PTHR36570:SF3">
    <property type="entry name" value="DISULFIDE BOND FORMATION PROTEIN B"/>
    <property type="match status" value="1"/>
</dbReference>
<dbReference type="Pfam" id="PF02600">
    <property type="entry name" value="DsbB"/>
    <property type="match status" value="1"/>
</dbReference>
<dbReference type="SUPFAM" id="SSF158442">
    <property type="entry name" value="DsbB-like"/>
    <property type="match status" value="1"/>
</dbReference>
<feature type="chain" id="PRO_0000298368" description="Disulfide bond formation protein B">
    <location>
        <begin position="1"/>
        <end position="168"/>
    </location>
</feature>
<feature type="topological domain" description="Cytoplasmic" evidence="1">
    <location>
        <begin position="1"/>
        <end position="6"/>
    </location>
</feature>
<feature type="transmembrane region" description="Helical" evidence="1">
    <location>
        <begin position="7"/>
        <end position="23"/>
    </location>
</feature>
<feature type="topological domain" description="Periplasmic" evidence="1">
    <location>
        <begin position="24"/>
        <end position="41"/>
    </location>
</feature>
<feature type="transmembrane region" description="Helical" evidence="1">
    <location>
        <begin position="42"/>
        <end position="58"/>
    </location>
</feature>
<feature type="topological domain" description="Cytoplasmic" evidence="1">
    <location>
        <begin position="59"/>
        <end position="65"/>
    </location>
</feature>
<feature type="transmembrane region" description="Helical" evidence="1">
    <location>
        <begin position="66"/>
        <end position="82"/>
    </location>
</feature>
<feature type="topological domain" description="Periplasmic" evidence="1">
    <location>
        <begin position="83"/>
        <end position="139"/>
    </location>
</feature>
<feature type="transmembrane region" description="Helical" evidence="1">
    <location>
        <begin position="140"/>
        <end position="158"/>
    </location>
</feature>
<feature type="topological domain" description="Cytoplasmic" evidence="1">
    <location>
        <begin position="159"/>
        <end position="168"/>
    </location>
</feature>
<feature type="disulfide bond" description="Redox-active" evidence="1">
    <location>
        <begin position="33"/>
        <end position="36"/>
    </location>
</feature>
<feature type="disulfide bond" description="Redox-active" evidence="1">
    <location>
        <begin position="98"/>
        <end position="125"/>
    </location>
</feature>
<reference key="1">
    <citation type="journal article" date="2011" name="Appl. Environ. Microbiol.">
        <title>Genomic potential of Marinobacter aquaeolei, a biogeochemical 'opportunitroph'.</title>
        <authorList>
            <person name="Singer E."/>
            <person name="Webb E.A."/>
            <person name="Nelson W.C."/>
            <person name="Heidelberg J.F."/>
            <person name="Ivanova N."/>
            <person name="Pati A."/>
            <person name="Edwards K.J."/>
        </authorList>
    </citation>
    <scope>NUCLEOTIDE SEQUENCE [LARGE SCALE GENOMIC DNA]</scope>
    <source>
        <strain>ATCC 700491 / DSM 11845 / VT8</strain>
    </source>
</reference>
<protein>
    <recommendedName>
        <fullName evidence="1">Disulfide bond formation protein B</fullName>
    </recommendedName>
    <alternativeName>
        <fullName evidence="1">Disulfide oxidoreductase</fullName>
    </alternativeName>
</protein>
<accession>A1TXV0</accession>